<accession>B3NQ14</accession>
<protein>
    <recommendedName>
        <fullName evidence="6">Cyclic GMP-AMP synthase-like receptor 1</fullName>
        <shortName evidence="5">cGLR1</shortName>
        <ecNumber evidence="4">2.7.7.-</ecNumber>
    </recommendedName>
</protein>
<comment type="function">
    <text evidence="1 4">Nucleotidyltransferase that catalyzes the formation of cyclic GMP-AMP (3',2'-cGAMP) from ATP and GTP and plays a key role in innate immunity (PubMed:34261127). Synthesizes 3',2'-cGAMP in a two-step reaction through production of the linear intermediate pppA(2'-5')pG (By similarity). Acts as a key sensor of double-stranded RNA (dsRNA), the presence of dsRNA in the cytoplasm being a danger signal that triggers the immune responses (PubMed:34261127). Directly binds dsRNA, activating the nucleotidyltransferase activity, leading to synthesis of 3',2'-cGAMP, a second messenger that binds to and activates Sting, thereby triggering the antiviral immune response via activation of the NF-kappa-B transcription factor Rel (Relish) (By similarity).</text>
</comment>
<comment type="catalytic activity">
    <reaction evidence="1">
        <text>GTP + ATP = 3',2'-cGAMP + 2 diphosphate</text>
        <dbReference type="Rhea" id="RHEA:68344"/>
        <dbReference type="ChEBI" id="CHEBI:30616"/>
        <dbReference type="ChEBI" id="CHEBI:33019"/>
        <dbReference type="ChEBI" id="CHEBI:37565"/>
        <dbReference type="ChEBI" id="CHEBI:177334"/>
    </reaction>
    <physiologicalReaction direction="left-to-right" evidence="1">
        <dbReference type="Rhea" id="RHEA:68345"/>
    </physiologicalReaction>
</comment>
<comment type="catalytic activity">
    <reaction evidence="1">
        <text>GTP + ATP = pppA(2'-5')pG + diphosphate</text>
        <dbReference type="Rhea" id="RHEA:68348"/>
        <dbReference type="ChEBI" id="CHEBI:30616"/>
        <dbReference type="ChEBI" id="CHEBI:33019"/>
        <dbReference type="ChEBI" id="CHEBI:37565"/>
        <dbReference type="ChEBI" id="CHEBI:177335"/>
    </reaction>
    <physiologicalReaction direction="left-to-right" evidence="1">
        <dbReference type="Rhea" id="RHEA:68349"/>
    </physiologicalReaction>
</comment>
<comment type="catalytic activity">
    <reaction evidence="1">
        <text>pppA(2'-5')pG = 3',2'-cGAMP + diphosphate</text>
        <dbReference type="Rhea" id="RHEA:68352"/>
        <dbReference type="ChEBI" id="CHEBI:33019"/>
        <dbReference type="ChEBI" id="CHEBI:177334"/>
        <dbReference type="ChEBI" id="CHEBI:177335"/>
    </reaction>
    <physiologicalReaction direction="left-to-right" evidence="1">
        <dbReference type="Rhea" id="RHEA:68353"/>
    </physiologicalReaction>
</comment>
<comment type="cofactor">
    <cofactor evidence="1">
        <name>Mg(2+)</name>
        <dbReference type="ChEBI" id="CHEBI:18420"/>
    </cofactor>
    <cofactor evidence="1">
        <name>Mn(2+)</name>
        <dbReference type="ChEBI" id="CHEBI:29035"/>
    </cofactor>
</comment>
<comment type="activity regulation">
    <text evidence="4">The enzyme activity is specifically activated by double-stranded RNA (dsRNA).</text>
</comment>
<comment type="similarity">
    <text evidence="6">Belongs to the mab-21 family.</text>
</comment>
<proteinExistence type="inferred from homology"/>
<reference key="1">
    <citation type="journal article" date="2007" name="Nature">
        <title>Evolution of genes and genomes on the Drosophila phylogeny.</title>
        <authorList>
            <consortium name="Drosophila 12 genomes consortium"/>
        </authorList>
    </citation>
    <scope>NUCLEOTIDE SEQUENCE [LARGE SCALE GENOMIC DNA]</scope>
    <source>
        <strain>Tucson 14021-0224.01</strain>
    </source>
</reference>
<reference key="2">
    <citation type="journal article" date="2021" name="Nature">
        <title>cGAS-like receptors sense RNA and control 3'2'-cGAMP signaling in Drosophila.</title>
        <authorList>
            <person name="Slavik K.M."/>
            <person name="Morehouse B.R."/>
            <person name="Ragucci A.E."/>
            <person name="Zhou W."/>
            <person name="Ai X."/>
            <person name="Chen Y."/>
            <person name="Li L."/>
            <person name="Wei Z."/>
            <person name="Baehre H."/>
            <person name="Koenig M."/>
            <person name="Seifert R."/>
            <person name="Lee A.S.Y."/>
            <person name="Cai H."/>
            <person name="Imler J.L."/>
            <person name="Kranzusch P.J."/>
        </authorList>
    </citation>
    <scope>FUNCTION</scope>
    <scope>ACTIVITY REGULATION</scope>
</reference>
<organism>
    <name type="scientific">Drosophila erecta</name>
    <name type="common">Fruit fly</name>
    <dbReference type="NCBI Taxonomy" id="7220"/>
    <lineage>
        <taxon>Eukaryota</taxon>
        <taxon>Metazoa</taxon>
        <taxon>Ecdysozoa</taxon>
        <taxon>Arthropoda</taxon>
        <taxon>Hexapoda</taxon>
        <taxon>Insecta</taxon>
        <taxon>Pterygota</taxon>
        <taxon>Neoptera</taxon>
        <taxon>Endopterygota</taxon>
        <taxon>Diptera</taxon>
        <taxon>Brachycera</taxon>
        <taxon>Muscomorpha</taxon>
        <taxon>Ephydroidea</taxon>
        <taxon>Drosophilidae</taxon>
        <taxon>Drosophila</taxon>
        <taxon>Sophophora</taxon>
    </lineage>
</organism>
<sequence>MVRNLEDFCNEANAKHIRIEDRERYTGHFNALKDMVYSYWKKSKGLDKLVKGTTLCGGYGDNLKVSKPDEYDLLIHLVFPENDKIIVKADASNPGNVLLDMTKVMEIIAKQEHNKPVFDLLQKIVNNKKQLLEDKLQSFLHGIMTQTLNKMGNRIEVQGEISHLSYKKCGPAHNILVKGPCEYSVDFVPAIKLSAAQLVLAPEQRKHFGGTLYWDAVPKPMKPAKPDNPSFRTSFYEAERSLLHGKQNLKSAIRMIKHIRNEKNKANLKSYHIKTVFLWQVMEKDASYWEKPKKEILIEMLGKLADLLALTPRKGRLPYFWDPKLDMFADLTDDQRTDMFNCFRKCEYVFRKADGNLNDDNENSVHSSFKGSGRNGQKMEKTSTESEQKKPTETKPNAKVESTPVKPNPKPSVQEKQAKPNLADQKKCTKNANGTKSKTTTPKPS</sequence>
<name>CGLR1_DROER</name>
<evidence type="ECO:0000250" key="1">
    <source>
        <dbReference type="UniProtKB" id="A1ZA55"/>
    </source>
</evidence>
<evidence type="ECO:0000250" key="2">
    <source>
        <dbReference type="UniProtKB" id="Q8N884"/>
    </source>
</evidence>
<evidence type="ECO:0000256" key="3">
    <source>
        <dbReference type="SAM" id="MobiDB-lite"/>
    </source>
</evidence>
<evidence type="ECO:0000269" key="4">
    <source>
    </source>
</evidence>
<evidence type="ECO:0000303" key="5">
    <source>
    </source>
</evidence>
<evidence type="ECO:0000305" key="6"/>
<dbReference type="EC" id="2.7.7.-" evidence="4"/>
<dbReference type="EMBL" id="CH954179">
    <property type="protein sequence ID" value="EDV55861.1"/>
    <property type="molecule type" value="Genomic_DNA"/>
</dbReference>
<dbReference type="SMR" id="B3NQ14"/>
<dbReference type="EnsemblMetazoa" id="FBtr0140604">
    <property type="protein sequence ID" value="FBpp0139096"/>
    <property type="gene ID" value="FBgn0112740"/>
</dbReference>
<dbReference type="EnsemblMetazoa" id="XM_001975425.2">
    <property type="protein sequence ID" value="XP_001975461.1"/>
    <property type="gene ID" value="LOC6548847"/>
</dbReference>
<dbReference type="GeneID" id="6548847"/>
<dbReference type="KEGG" id="der:6548847"/>
<dbReference type="CTD" id="36744"/>
<dbReference type="eggNOG" id="ENOG502S61H">
    <property type="taxonomic scope" value="Eukaryota"/>
</dbReference>
<dbReference type="HOGENOM" id="CLU_034978_0_0_1"/>
<dbReference type="OMA" id="ANLKSYH"/>
<dbReference type="OrthoDB" id="7249367at2759"/>
<dbReference type="PhylomeDB" id="B3NQ14"/>
<dbReference type="Proteomes" id="UP000008711">
    <property type="component" value="Unassembled WGS sequence"/>
</dbReference>
<dbReference type="GO" id="GO:0061501">
    <property type="term" value="F:2',3'-cyclic GMP-AMP synthase activity"/>
    <property type="evidence" value="ECO:0007669"/>
    <property type="project" value="EnsemblMetazoa"/>
</dbReference>
<dbReference type="GO" id="GO:0140700">
    <property type="term" value="F:3',2'-cyclic GMP-AMP synthase activity"/>
    <property type="evidence" value="ECO:0000250"/>
    <property type="project" value="UniProtKB"/>
</dbReference>
<dbReference type="GO" id="GO:0005524">
    <property type="term" value="F:ATP binding"/>
    <property type="evidence" value="ECO:0007669"/>
    <property type="project" value="UniProtKB-KW"/>
</dbReference>
<dbReference type="GO" id="GO:0003725">
    <property type="term" value="F:double-stranded RNA binding"/>
    <property type="evidence" value="ECO:0000314"/>
    <property type="project" value="UniProtKB"/>
</dbReference>
<dbReference type="GO" id="GO:0005525">
    <property type="term" value="F:GTP binding"/>
    <property type="evidence" value="ECO:0007669"/>
    <property type="project" value="UniProtKB-KW"/>
</dbReference>
<dbReference type="GO" id="GO:0046872">
    <property type="term" value="F:metal ion binding"/>
    <property type="evidence" value="ECO:0007669"/>
    <property type="project" value="UniProtKB-KW"/>
</dbReference>
<dbReference type="GO" id="GO:0098586">
    <property type="term" value="P:cellular response to virus"/>
    <property type="evidence" value="ECO:0007669"/>
    <property type="project" value="EnsemblMetazoa"/>
</dbReference>
<dbReference type="GO" id="GO:0140896">
    <property type="term" value="P:cGAS/STING signaling pathway"/>
    <property type="evidence" value="ECO:0007669"/>
    <property type="project" value="EnsemblMetazoa"/>
</dbReference>
<dbReference type="GO" id="GO:0051607">
    <property type="term" value="P:defense response to virus"/>
    <property type="evidence" value="ECO:0000250"/>
    <property type="project" value="UniProtKB"/>
</dbReference>
<dbReference type="GO" id="GO:1902615">
    <property type="term" value="P:immune response involved in response to exogenous dsRNA"/>
    <property type="evidence" value="ECO:0000314"/>
    <property type="project" value="UniProtKB"/>
</dbReference>
<dbReference type="GO" id="GO:0045087">
    <property type="term" value="P:innate immune response"/>
    <property type="evidence" value="ECO:0007669"/>
    <property type="project" value="UniProtKB-KW"/>
</dbReference>
<dbReference type="Gene3D" id="1.10.1410.40">
    <property type="match status" value="1"/>
</dbReference>
<dbReference type="Gene3D" id="3.30.460.90">
    <property type="match status" value="1"/>
</dbReference>
<dbReference type="InterPro" id="IPR046903">
    <property type="entry name" value="Mab-21-like_nuc_Trfase"/>
</dbReference>
<dbReference type="InterPro" id="IPR046906">
    <property type="entry name" value="Mab-21_HhH/H2TH-like"/>
</dbReference>
<dbReference type="InterPro" id="IPR024810">
    <property type="entry name" value="MAB21L/cGLR"/>
</dbReference>
<dbReference type="PANTHER" id="PTHR10656">
    <property type="entry name" value="CELL FATE DETERMINING PROTEIN MAB21-RELATED"/>
    <property type="match status" value="1"/>
</dbReference>
<dbReference type="PANTHER" id="PTHR10656:SF42">
    <property type="entry name" value="CYCLIC GMP-AMP SYNTHASE-LIKE PROTEIN-RELATED"/>
    <property type="match status" value="1"/>
</dbReference>
<dbReference type="Pfam" id="PF03281">
    <property type="entry name" value="Mab-21"/>
    <property type="match status" value="1"/>
</dbReference>
<dbReference type="Pfam" id="PF20266">
    <property type="entry name" value="Mab-21_C"/>
    <property type="match status" value="1"/>
</dbReference>
<dbReference type="SMART" id="SM01265">
    <property type="entry name" value="Mab-21"/>
    <property type="match status" value="1"/>
</dbReference>
<gene>
    <name type="ORF">GG20550</name>
</gene>
<feature type="chain" id="PRO_0000454445" description="Cyclic GMP-AMP synthase-like receptor 1">
    <location>
        <begin position="1"/>
        <end position="445"/>
    </location>
</feature>
<feature type="region of interest" description="Disordered" evidence="3">
    <location>
        <begin position="357"/>
        <end position="445"/>
    </location>
</feature>
<feature type="compositionally biased region" description="Basic and acidic residues" evidence="3">
    <location>
        <begin position="377"/>
        <end position="398"/>
    </location>
</feature>
<feature type="compositionally biased region" description="Low complexity" evidence="3">
    <location>
        <begin position="435"/>
        <end position="445"/>
    </location>
</feature>
<feature type="binding site" evidence="2">
    <location>
        <begin position="70"/>
        <end position="72"/>
    </location>
    <ligand>
        <name>ATP</name>
        <dbReference type="ChEBI" id="CHEBI:30616"/>
    </ligand>
</feature>
<feature type="binding site" evidence="2">
    <location>
        <position position="70"/>
    </location>
    <ligand>
        <name>Mg(2+)</name>
        <dbReference type="ChEBI" id="CHEBI:18420"/>
        <note>catalytic</note>
    </ligand>
</feature>
<feature type="binding site" evidence="2">
    <location>
        <position position="72"/>
    </location>
    <ligand>
        <name>Mg(2+)</name>
        <dbReference type="ChEBI" id="CHEBI:18420"/>
        <note>catalytic</note>
    </ligand>
</feature>
<feature type="binding site" evidence="2">
    <location>
        <position position="186"/>
    </location>
    <ligand>
        <name>GTP</name>
        <dbReference type="ChEBI" id="CHEBI:37565"/>
    </ligand>
</feature>
<feature type="binding site" evidence="2">
    <location>
        <position position="186"/>
    </location>
    <ligand>
        <name>Mg(2+)</name>
        <dbReference type="ChEBI" id="CHEBI:18420"/>
        <note>catalytic</note>
    </ligand>
</feature>
<feature type="binding site" evidence="2">
    <location>
        <begin position="232"/>
        <end position="239"/>
    </location>
    <ligand>
        <name>GTP</name>
        <dbReference type="ChEBI" id="CHEBI:37565"/>
    </ligand>
</feature>
<feature type="binding site" evidence="2">
    <location>
        <begin position="236"/>
        <end position="239"/>
    </location>
    <ligand>
        <name>ATP</name>
        <dbReference type="ChEBI" id="CHEBI:30616"/>
    </ligand>
</feature>
<feature type="binding site" evidence="2">
    <location>
        <position position="257"/>
    </location>
    <ligand>
        <name>ATP</name>
        <dbReference type="ChEBI" id="CHEBI:30616"/>
    </ligand>
</feature>
<feature type="binding site" evidence="2">
    <location>
        <begin position="270"/>
        <end position="274"/>
    </location>
    <ligand>
        <name>ATP</name>
        <dbReference type="ChEBI" id="CHEBI:30616"/>
    </ligand>
</feature>
<keyword id="KW-0051">Antiviral defense</keyword>
<keyword id="KW-0067">ATP-binding</keyword>
<keyword id="KW-0342">GTP-binding</keyword>
<keyword id="KW-0391">Immunity</keyword>
<keyword id="KW-0399">Innate immunity</keyword>
<keyword id="KW-0460">Magnesium</keyword>
<keyword id="KW-0464">Manganese</keyword>
<keyword id="KW-0479">Metal-binding</keyword>
<keyword id="KW-0547">Nucleotide-binding</keyword>
<keyword id="KW-0548">Nucleotidyltransferase</keyword>
<keyword id="KW-0694">RNA-binding</keyword>
<keyword id="KW-0808">Transferase</keyword>